<reference key="1">
    <citation type="journal article" date="2001" name="Genome Res.">
        <title>The complete genome sequence of the lactic acid bacterium Lactococcus lactis ssp. lactis IL1403.</title>
        <authorList>
            <person name="Bolotin A."/>
            <person name="Wincker P."/>
            <person name="Mauger S."/>
            <person name="Jaillon O."/>
            <person name="Malarme K."/>
            <person name="Weissenbach J."/>
            <person name="Ehrlich S.D."/>
            <person name="Sorokin A."/>
        </authorList>
    </citation>
    <scope>NUCLEOTIDE SEQUENCE [LARGE SCALE GENOMIC DNA]</scope>
    <source>
        <strain>IL1403</strain>
    </source>
</reference>
<gene>
    <name evidence="1" type="primary">uxuA</name>
    <name type="ordered locus">LL1631</name>
    <name type="ORF">L0020</name>
</gene>
<feature type="chain" id="PRO_0000170676" description="Mannonate dehydratase">
    <location>
        <begin position="1"/>
        <end position="358"/>
    </location>
</feature>
<proteinExistence type="inferred from homology"/>
<evidence type="ECO:0000255" key="1">
    <source>
        <dbReference type="HAMAP-Rule" id="MF_00106"/>
    </source>
</evidence>
<sequence length="358" mass="40826">MEMTMRWFGSNADKIKLSEIAQVPGVKGVVGMIMDIPAGEIWPKERIKALKEEIEAAGLTLKVIESVNIHDDIKIGLPTRDKYIENYKETIRNLAEFGIEVICYNFMPVFDWLKSDLDYRLADNSQTMAFVARDIPANPQEIIDRVQAADGCFSLPGWEPERLSEVRGLFEAYKNVDEHKLRENFAYFLKAIIPTCEEVGIKMAVHPDDPPYPMFGLPRVVKNREDLDWICNVVDSPSNAITLCTGSIAEDPANNVYEIMAEFVKRDRIPFAHVRNIKFLPSGKKDFYEAPHMSKYGSLDMYKIMKAMYDNGFDGYIRPDHGRMIWGETGRPGYGLYDRALGASYLNGLWEALEKTNQ</sequence>
<keyword id="KW-0408">Iron</keyword>
<keyword id="KW-0456">Lyase</keyword>
<keyword id="KW-0464">Manganese</keyword>
<keyword id="KW-1185">Reference proteome</keyword>
<organism>
    <name type="scientific">Lactococcus lactis subsp. lactis (strain IL1403)</name>
    <name type="common">Streptococcus lactis</name>
    <dbReference type="NCBI Taxonomy" id="272623"/>
    <lineage>
        <taxon>Bacteria</taxon>
        <taxon>Bacillati</taxon>
        <taxon>Bacillota</taxon>
        <taxon>Bacilli</taxon>
        <taxon>Lactobacillales</taxon>
        <taxon>Streptococcaceae</taxon>
        <taxon>Lactococcus</taxon>
    </lineage>
</organism>
<comment type="function">
    <text evidence="1">Catalyzes the dehydration of D-mannonate.</text>
</comment>
<comment type="catalytic activity">
    <reaction evidence="1">
        <text>D-mannonate = 2-dehydro-3-deoxy-D-gluconate + H2O</text>
        <dbReference type="Rhea" id="RHEA:20097"/>
        <dbReference type="ChEBI" id="CHEBI:15377"/>
        <dbReference type="ChEBI" id="CHEBI:17767"/>
        <dbReference type="ChEBI" id="CHEBI:57990"/>
        <dbReference type="EC" id="4.2.1.8"/>
    </reaction>
</comment>
<comment type="cofactor">
    <cofactor evidence="1">
        <name>Fe(2+)</name>
        <dbReference type="ChEBI" id="CHEBI:29033"/>
    </cofactor>
    <cofactor evidence="1">
        <name>Mn(2+)</name>
        <dbReference type="ChEBI" id="CHEBI:29035"/>
    </cofactor>
</comment>
<comment type="pathway">
    <text evidence="1">Carbohydrate metabolism; pentose and glucuronate interconversion.</text>
</comment>
<comment type="similarity">
    <text evidence="1">Belongs to the mannonate dehydratase family.</text>
</comment>
<protein>
    <recommendedName>
        <fullName evidence="1">Mannonate dehydratase</fullName>
        <ecNumber evidence="1">4.2.1.8</ecNumber>
    </recommendedName>
    <alternativeName>
        <fullName evidence="1">D-mannonate hydro-lyase</fullName>
    </alternativeName>
</protein>
<dbReference type="EC" id="4.2.1.8" evidence="1"/>
<dbReference type="EMBL" id="AE005176">
    <property type="protein sequence ID" value="AAK05729.1"/>
    <property type="molecule type" value="Genomic_DNA"/>
</dbReference>
<dbReference type="PIR" id="G86828">
    <property type="entry name" value="G86828"/>
</dbReference>
<dbReference type="RefSeq" id="NP_267787.1">
    <property type="nucleotide sequence ID" value="NC_002662.1"/>
</dbReference>
<dbReference type="RefSeq" id="WP_010906067.1">
    <property type="nucleotide sequence ID" value="NC_002662.1"/>
</dbReference>
<dbReference type="SMR" id="Q9CF50"/>
<dbReference type="PaxDb" id="272623-L0020"/>
<dbReference type="EnsemblBacteria" id="AAK05729">
    <property type="protein sequence ID" value="AAK05729"/>
    <property type="gene ID" value="L0020"/>
</dbReference>
<dbReference type="KEGG" id="lla:L0020"/>
<dbReference type="PATRIC" id="fig|272623.7.peg.1752"/>
<dbReference type="eggNOG" id="COG1312">
    <property type="taxonomic scope" value="Bacteria"/>
</dbReference>
<dbReference type="HOGENOM" id="CLU_058621_1_0_9"/>
<dbReference type="OrthoDB" id="9780250at2"/>
<dbReference type="UniPathway" id="UPA00246"/>
<dbReference type="Proteomes" id="UP000002196">
    <property type="component" value="Chromosome"/>
</dbReference>
<dbReference type="GO" id="GO:0008198">
    <property type="term" value="F:ferrous iron binding"/>
    <property type="evidence" value="ECO:0007669"/>
    <property type="project" value="TreeGrafter"/>
</dbReference>
<dbReference type="GO" id="GO:0030145">
    <property type="term" value="F:manganese ion binding"/>
    <property type="evidence" value="ECO:0007669"/>
    <property type="project" value="TreeGrafter"/>
</dbReference>
<dbReference type="GO" id="GO:0008927">
    <property type="term" value="F:mannonate dehydratase activity"/>
    <property type="evidence" value="ECO:0007669"/>
    <property type="project" value="UniProtKB-UniRule"/>
</dbReference>
<dbReference type="GO" id="GO:0042840">
    <property type="term" value="P:D-glucuronate catabolic process"/>
    <property type="evidence" value="ECO:0007669"/>
    <property type="project" value="TreeGrafter"/>
</dbReference>
<dbReference type="Gene3D" id="3.20.20.150">
    <property type="entry name" value="Divalent-metal-dependent TIM barrel enzymes"/>
    <property type="match status" value="1"/>
</dbReference>
<dbReference type="HAMAP" id="MF_00106">
    <property type="entry name" value="UxuA"/>
    <property type="match status" value="1"/>
</dbReference>
<dbReference type="InterPro" id="IPR004628">
    <property type="entry name" value="Man_deHydtase"/>
</dbReference>
<dbReference type="InterPro" id="IPR036237">
    <property type="entry name" value="Xyl_isomerase-like_sf"/>
</dbReference>
<dbReference type="NCBIfam" id="NF003027">
    <property type="entry name" value="PRK03906.1"/>
    <property type="match status" value="1"/>
</dbReference>
<dbReference type="NCBIfam" id="TIGR00695">
    <property type="entry name" value="uxuA"/>
    <property type="match status" value="1"/>
</dbReference>
<dbReference type="PANTHER" id="PTHR30387">
    <property type="entry name" value="MANNONATE DEHYDRATASE"/>
    <property type="match status" value="1"/>
</dbReference>
<dbReference type="PANTHER" id="PTHR30387:SF2">
    <property type="entry name" value="MANNONATE DEHYDRATASE"/>
    <property type="match status" value="1"/>
</dbReference>
<dbReference type="Pfam" id="PF03786">
    <property type="entry name" value="UxuA"/>
    <property type="match status" value="1"/>
</dbReference>
<dbReference type="PIRSF" id="PIRSF016049">
    <property type="entry name" value="Man_dehyd"/>
    <property type="match status" value="1"/>
</dbReference>
<dbReference type="SUPFAM" id="SSF51658">
    <property type="entry name" value="Xylose isomerase-like"/>
    <property type="match status" value="1"/>
</dbReference>
<name>UXUA_LACLA</name>
<accession>Q9CF50</accession>